<gene>
    <name evidence="1" type="primary">psmB</name>
    <name type="ordered locus">Mbur_0374</name>
</gene>
<keyword id="KW-0068">Autocatalytic cleavage</keyword>
<keyword id="KW-0963">Cytoplasm</keyword>
<keyword id="KW-0378">Hydrolase</keyword>
<keyword id="KW-0645">Protease</keyword>
<keyword id="KW-0647">Proteasome</keyword>
<keyword id="KW-0888">Threonine protease</keyword>
<keyword id="KW-0865">Zymogen</keyword>
<proteinExistence type="inferred from homology"/>
<sequence>MDNDKHLKGTTTVGIVCTDGVVLATEQRATMGHFIASKTAKKIYQIDDLVGMTTAGSVGDAQQIVRIISVESKLFKMRRQESITIKGITTLLSNMLSGQRYYPLMVQLLIGGVDKNGPAIYSLDALGGNIEETRAVSTGSGSPMAYGVLEDRYTEDMTVVEGVDLAIRALHNAMKRDSASGENIDVVVITKDKYERLDPEAVMKKRELLN</sequence>
<evidence type="ECO:0000255" key="1">
    <source>
        <dbReference type="HAMAP-Rule" id="MF_02113"/>
    </source>
</evidence>
<comment type="function">
    <text evidence="1">Component of the proteasome core, a large protease complex with broad specificity involved in protein degradation.</text>
</comment>
<comment type="catalytic activity">
    <reaction evidence="1">
        <text>Cleavage of peptide bonds with very broad specificity.</text>
        <dbReference type="EC" id="3.4.25.1"/>
    </reaction>
</comment>
<comment type="activity regulation">
    <text evidence="1">The formation of the proteasomal ATPase PAN-20S proteasome complex, via the docking of the C-termini of PAN into the intersubunit pockets in the alpha-rings, triggers opening of the gate for substrate entry. Interconversion between the open-gate and close-gate conformations leads to a dynamic regulation of the 20S proteasome proteolysis activity.</text>
</comment>
<comment type="subunit">
    <text evidence="1">The 20S proteasome core is composed of 14 alpha and 14 beta subunits that assemble into four stacked heptameric rings, resulting in a barrel-shaped structure. The two inner rings, each composed of seven catalytic beta subunits, are sandwiched by two outer rings, each composed of seven alpha subunits. The catalytic chamber with the active sites is on the inside of the barrel. Has a gated structure, the ends of the cylinder being occluded by the N-termini of the alpha-subunits. Is capped at one or both ends by the proteasome regulatory ATPase, PAN.</text>
</comment>
<comment type="subcellular location">
    <subcellularLocation>
        <location evidence="1">Cytoplasm</location>
    </subcellularLocation>
</comment>
<comment type="similarity">
    <text evidence="1">Belongs to the peptidase T1B family.</text>
</comment>
<dbReference type="EC" id="3.4.25.1" evidence="1"/>
<dbReference type="EMBL" id="CP000300">
    <property type="protein sequence ID" value="ABE51369.1"/>
    <property type="molecule type" value="Genomic_DNA"/>
</dbReference>
<dbReference type="RefSeq" id="WP_011498531.1">
    <property type="nucleotide sequence ID" value="NC_007955.1"/>
</dbReference>
<dbReference type="SMR" id="Q12YV7"/>
<dbReference type="STRING" id="259564.Mbur_0374"/>
<dbReference type="MEROPS" id="T01.002"/>
<dbReference type="GeneID" id="3997587"/>
<dbReference type="KEGG" id="mbu:Mbur_0374"/>
<dbReference type="HOGENOM" id="CLU_035750_7_2_2"/>
<dbReference type="OrthoDB" id="6330at2157"/>
<dbReference type="Proteomes" id="UP000001979">
    <property type="component" value="Chromosome"/>
</dbReference>
<dbReference type="GO" id="GO:0005737">
    <property type="term" value="C:cytoplasm"/>
    <property type="evidence" value="ECO:0007669"/>
    <property type="project" value="UniProtKB-SubCell"/>
</dbReference>
<dbReference type="GO" id="GO:0019774">
    <property type="term" value="C:proteasome core complex, beta-subunit complex"/>
    <property type="evidence" value="ECO:0007669"/>
    <property type="project" value="UniProtKB-UniRule"/>
</dbReference>
<dbReference type="GO" id="GO:0004298">
    <property type="term" value="F:threonine-type endopeptidase activity"/>
    <property type="evidence" value="ECO:0007669"/>
    <property type="project" value="UniProtKB-UniRule"/>
</dbReference>
<dbReference type="GO" id="GO:0010498">
    <property type="term" value="P:proteasomal protein catabolic process"/>
    <property type="evidence" value="ECO:0007669"/>
    <property type="project" value="UniProtKB-UniRule"/>
</dbReference>
<dbReference type="CDD" id="cd03764">
    <property type="entry name" value="proteasome_beta_archeal"/>
    <property type="match status" value="1"/>
</dbReference>
<dbReference type="FunFam" id="3.60.20.10:FF:000049">
    <property type="entry name" value="Proteasome subunit beta"/>
    <property type="match status" value="1"/>
</dbReference>
<dbReference type="Gene3D" id="3.60.20.10">
    <property type="entry name" value="Glutamine Phosphoribosylpyrophosphate, subunit 1, domain 1"/>
    <property type="match status" value="1"/>
</dbReference>
<dbReference type="HAMAP" id="MF_02113_A">
    <property type="entry name" value="Proteasome_B_A"/>
    <property type="match status" value="1"/>
</dbReference>
<dbReference type="InterPro" id="IPR029055">
    <property type="entry name" value="Ntn_hydrolases_N"/>
</dbReference>
<dbReference type="InterPro" id="IPR019983">
    <property type="entry name" value="Pept_T1A_Psome_bsu_arc"/>
</dbReference>
<dbReference type="InterPro" id="IPR000243">
    <property type="entry name" value="Pept_T1A_subB"/>
</dbReference>
<dbReference type="InterPro" id="IPR016050">
    <property type="entry name" value="Proteasome_bsu_CS"/>
</dbReference>
<dbReference type="InterPro" id="IPR001353">
    <property type="entry name" value="Proteasome_sua/b"/>
</dbReference>
<dbReference type="InterPro" id="IPR023333">
    <property type="entry name" value="Proteasome_suB-type"/>
</dbReference>
<dbReference type="NCBIfam" id="TIGR03634">
    <property type="entry name" value="arc_protsome_B"/>
    <property type="match status" value="1"/>
</dbReference>
<dbReference type="PANTHER" id="PTHR32194:SF0">
    <property type="entry name" value="ATP-DEPENDENT PROTEASE SUBUNIT HSLV"/>
    <property type="match status" value="1"/>
</dbReference>
<dbReference type="PANTHER" id="PTHR32194">
    <property type="entry name" value="METALLOPROTEASE TLDD"/>
    <property type="match status" value="1"/>
</dbReference>
<dbReference type="Pfam" id="PF00227">
    <property type="entry name" value="Proteasome"/>
    <property type="match status" value="1"/>
</dbReference>
<dbReference type="PRINTS" id="PR00141">
    <property type="entry name" value="PROTEASOME"/>
</dbReference>
<dbReference type="SUPFAM" id="SSF56235">
    <property type="entry name" value="N-terminal nucleophile aminohydrolases (Ntn hydrolases)"/>
    <property type="match status" value="1"/>
</dbReference>
<dbReference type="PROSITE" id="PS00854">
    <property type="entry name" value="PROTEASOME_BETA_1"/>
    <property type="match status" value="1"/>
</dbReference>
<dbReference type="PROSITE" id="PS51476">
    <property type="entry name" value="PROTEASOME_BETA_2"/>
    <property type="match status" value="1"/>
</dbReference>
<feature type="propeptide" id="PRO_0000397342" description="Removed in mature form; by autocatalysis" evidence="1">
    <location>
        <begin position="1"/>
        <end position="9"/>
    </location>
</feature>
<feature type="chain" id="PRO_0000397343" description="Proteasome subunit beta">
    <location>
        <begin position="10"/>
        <end position="210"/>
    </location>
</feature>
<feature type="active site" description="Nucleophile" evidence="1">
    <location>
        <position position="10"/>
    </location>
</feature>
<accession>Q12YV7</accession>
<organism>
    <name type="scientific">Methanococcoides burtonii (strain DSM 6242 / NBRC 107633 / OCM 468 / ACE-M)</name>
    <dbReference type="NCBI Taxonomy" id="259564"/>
    <lineage>
        <taxon>Archaea</taxon>
        <taxon>Methanobacteriati</taxon>
        <taxon>Methanobacteriota</taxon>
        <taxon>Stenosarchaea group</taxon>
        <taxon>Methanomicrobia</taxon>
        <taxon>Methanosarcinales</taxon>
        <taxon>Methanosarcinaceae</taxon>
        <taxon>Methanococcoides</taxon>
    </lineage>
</organism>
<protein>
    <recommendedName>
        <fullName evidence="1">Proteasome subunit beta</fullName>
        <ecNumber evidence="1">3.4.25.1</ecNumber>
    </recommendedName>
    <alternativeName>
        <fullName evidence="1">20S proteasome beta subunit</fullName>
    </alternativeName>
    <alternativeName>
        <fullName evidence="1">Proteasome core protein PsmB</fullName>
    </alternativeName>
</protein>
<reference key="1">
    <citation type="journal article" date="2009" name="ISME J.">
        <title>The genome sequence of the psychrophilic archaeon, Methanococcoides burtonii: the role of genome evolution in cold adaptation.</title>
        <authorList>
            <person name="Allen M.A."/>
            <person name="Lauro F.M."/>
            <person name="Williams T.J."/>
            <person name="Burg D."/>
            <person name="Siddiqui K.S."/>
            <person name="De Francisci D."/>
            <person name="Chong K.W."/>
            <person name="Pilak O."/>
            <person name="Chew H.H."/>
            <person name="De Maere M.Z."/>
            <person name="Ting L."/>
            <person name="Katrib M."/>
            <person name="Ng C."/>
            <person name="Sowers K.R."/>
            <person name="Galperin M.Y."/>
            <person name="Anderson I.J."/>
            <person name="Ivanova N."/>
            <person name="Dalin E."/>
            <person name="Martinez M."/>
            <person name="Lapidus A."/>
            <person name="Hauser L."/>
            <person name="Land M."/>
            <person name="Thomas T."/>
            <person name="Cavicchioli R."/>
        </authorList>
    </citation>
    <scope>NUCLEOTIDE SEQUENCE [LARGE SCALE GENOMIC DNA]</scope>
    <source>
        <strain>DSM 6242 / NBRC 107633 / OCM 468 / ACE-M</strain>
    </source>
</reference>
<name>PSB_METBU</name>